<dbReference type="EMBL" id="EQ963487">
    <property type="protein sequence ID" value="EED44778.1"/>
    <property type="molecule type" value="Genomic_DNA"/>
</dbReference>
<dbReference type="RefSeq" id="XP_002385533.1">
    <property type="nucleotide sequence ID" value="XM_002385492.1"/>
</dbReference>
<dbReference type="EnsemblFungi" id="EED44778">
    <property type="protein sequence ID" value="EED44778"/>
    <property type="gene ID" value="AFLA_114800"/>
</dbReference>
<dbReference type="VEuPathDB" id="FungiDB:AFLA_012950"/>
<dbReference type="HOGENOM" id="CLU_2440438_0_0_1"/>
<dbReference type="GO" id="GO:0016020">
    <property type="term" value="C:membrane"/>
    <property type="evidence" value="ECO:0007669"/>
    <property type="project" value="UniProtKB-SubCell"/>
</dbReference>
<evidence type="ECO:0000255" key="1"/>
<evidence type="ECO:0000255" key="2">
    <source>
        <dbReference type="PROSITE-ProRule" id="PRU00498"/>
    </source>
</evidence>
<evidence type="ECO:0000303" key="3">
    <source>
    </source>
</evidence>
<evidence type="ECO:0000305" key="4">
    <source>
    </source>
</evidence>
<proteinExistence type="inferred from homology"/>
<protein>
    <recommendedName>
        <fullName evidence="3">Cluster 41 protein AFLA_114800</fullName>
    </recommendedName>
</protein>
<sequence length="90" mass="10140">MGRWICMYHTVPHARPSLADRRVFRIQPVTQFLATTTTFQHRASSEASYVPLEPGLLLLCCFYPIGNLILLVRLSLVLRNGSLVLPLSCV</sequence>
<feature type="chain" id="PRO_0000438567" description="Cluster 41 protein AFLA_114800">
    <location>
        <begin position="1"/>
        <end position="90"/>
    </location>
</feature>
<feature type="transmembrane region" description="Helical" evidence="1">
    <location>
        <begin position="55"/>
        <end position="77"/>
    </location>
</feature>
<feature type="glycosylation site" description="N-linked (GlcNAc...) asparagine" evidence="2">
    <location>
        <position position="80"/>
    </location>
</feature>
<accession>B8NYW8</accession>
<organism>
    <name type="scientific">Aspergillus flavus (strain ATCC 200026 / FGSC A1120 / IAM 13836 / NRRL 3357 / JCM 12722 / SRRC 167)</name>
    <dbReference type="NCBI Taxonomy" id="332952"/>
    <lineage>
        <taxon>Eukaryota</taxon>
        <taxon>Fungi</taxon>
        <taxon>Dikarya</taxon>
        <taxon>Ascomycota</taxon>
        <taxon>Pezizomycotina</taxon>
        <taxon>Eurotiomycetes</taxon>
        <taxon>Eurotiomycetidae</taxon>
        <taxon>Eurotiales</taxon>
        <taxon>Aspergillaceae</taxon>
        <taxon>Aspergillus</taxon>
        <taxon>Aspergillus subgen. Circumdati</taxon>
    </lineage>
</organism>
<comment type="function">
    <text evidence="4">Cluster 41 protein; part of the gene cluster 41 that mediates the biosynthesis of an extracellular and diffusible metabolite that is able to stimulate colony sclerotial production (PubMed:27647242).</text>
</comment>
<comment type="subcellular location">
    <subcellularLocation>
        <location evidence="1">Membrane</location>
        <topology evidence="1">Single-pass membrane protein</topology>
    </subcellularLocation>
</comment>
<gene>
    <name type="ORF">AFLA_114800</name>
</gene>
<keyword id="KW-0325">Glycoprotein</keyword>
<keyword id="KW-0472">Membrane</keyword>
<keyword id="KW-0812">Transmembrane</keyword>
<keyword id="KW-1133">Transmembrane helix</keyword>
<reference key="1">
    <citation type="journal article" date="2015" name="Genome Announc.">
        <title>Genome sequence of Aspergillus flavus NRRL 3357, a strain that causes aflatoxin contamination of food and feed.</title>
        <authorList>
            <person name="Nierman W.C."/>
            <person name="Yu J."/>
            <person name="Fedorova-Abrams N.D."/>
            <person name="Losada L."/>
            <person name="Cleveland T.E."/>
            <person name="Bhatnagar D."/>
            <person name="Bennett J.W."/>
            <person name="Dean R."/>
            <person name="Payne G.A."/>
        </authorList>
    </citation>
    <scope>NUCLEOTIDE SEQUENCE [LARGE SCALE GENOMIC DNA]</scope>
    <source>
        <strain>ATCC 200026 / FGSC A1120 / IAM 13836 / NRRL 3357 / JCM 12722 / SRRC 167</strain>
    </source>
</reference>
<reference key="2">
    <citation type="journal article" date="2010" name="Mol. Plant Pathol.">
        <title>Beyond aflatoxin: four distinct expression patterns and functional roles associated with Aspergillus flavus secondary metabolism gene clusters.</title>
        <authorList>
            <person name="Georgianna D.R."/>
            <person name="Fedorova N.D."/>
            <person name="Burroughs J.L."/>
            <person name="Dolezal A.L."/>
            <person name="Bok J.W."/>
            <person name="Horowitz-Brown S."/>
            <person name="Woloshuk C.P."/>
            <person name="Yu J."/>
            <person name="Keller N.P."/>
            <person name="Payne G.A."/>
        </authorList>
    </citation>
    <scope>IDENTIFICATION OF THE GENE CLUSTER 41</scope>
</reference>
<reference key="3">
    <citation type="journal article" date="2016" name="Fungal Biol.">
        <title>The Aspergillus flavus fluP-associated metabolite promotes sclerotial production.</title>
        <authorList>
            <person name="Chang P.K."/>
            <person name="Scharfenstein L.L."/>
            <person name="Ehrlich K.C."/>
            <person name="Diana Di Mavungu J."/>
        </authorList>
    </citation>
    <scope>FUNCTION OF THE GENE CLUSTER 41</scope>
</reference>
<name>FLUB_ASPFN</name>